<gene>
    <name evidence="1" type="primary">adk</name>
    <name type="ordered locus">BAB1_1234</name>
</gene>
<dbReference type="EC" id="2.7.4.3" evidence="1"/>
<dbReference type="EMBL" id="AM040264">
    <property type="protein sequence ID" value="CAJ11190.1"/>
    <property type="molecule type" value="Genomic_DNA"/>
</dbReference>
<dbReference type="RefSeq" id="WP_002964341.1">
    <property type="nucleotide sequence ID" value="NZ_KN046823.1"/>
</dbReference>
<dbReference type="SMR" id="Q2YRT7"/>
<dbReference type="STRING" id="359391.BAB1_1234"/>
<dbReference type="KEGG" id="bmf:BAB1_1234"/>
<dbReference type="PATRIC" id="fig|359391.11.peg.134"/>
<dbReference type="HOGENOM" id="CLU_032354_4_1_5"/>
<dbReference type="PhylomeDB" id="Q2YRT7"/>
<dbReference type="UniPathway" id="UPA00588">
    <property type="reaction ID" value="UER00649"/>
</dbReference>
<dbReference type="Proteomes" id="UP000002719">
    <property type="component" value="Chromosome I"/>
</dbReference>
<dbReference type="GO" id="GO:0005737">
    <property type="term" value="C:cytoplasm"/>
    <property type="evidence" value="ECO:0007669"/>
    <property type="project" value="UniProtKB-SubCell"/>
</dbReference>
<dbReference type="GO" id="GO:0004017">
    <property type="term" value="F:adenylate kinase activity"/>
    <property type="evidence" value="ECO:0007669"/>
    <property type="project" value="UniProtKB-UniRule"/>
</dbReference>
<dbReference type="GO" id="GO:0005524">
    <property type="term" value="F:ATP binding"/>
    <property type="evidence" value="ECO:0007669"/>
    <property type="project" value="UniProtKB-UniRule"/>
</dbReference>
<dbReference type="GO" id="GO:0044209">
    <property type="term" value="P:AMP salvage"/>
    <property type="evidence" value="ECO:0007669"/>
    <property type="project" value="UniProtKB-UniRule"/>
</dbReference>
<dbReference type="CDD" id="cd01428">
    <property type="entry name" value="ADK"/>
    <property type="match status" value="1"/>
</dbReference>
<dbReference type="Gene3D" id="3.40.50.300">
    <property type="entry name" value="P-loop containing nucleotide triphosphate hydrolases"/>
    <property type="match status" value="1"/>
</dbReference>
<dbReference type="HAMAP" id="MF_00235">
    <property type="entry name" value="Adenylate_kinase_Adk"/>
    <property type="match status" value="1"/>
</dbReference>
<dbReference type="InterPro" id="IPR006259">
    <property type="entry name" value="Adenyl_kin_sub"/>
</dbReference>
<dbReference type="InterPro" id="IPR000850">
    <property type="entry name" value="Adenylat/UMP-CMP_kin"/>
</dbReference>
<dbReference type="InterPro" id="IPR033690">
    <property type="entry name" value="Adenylat_kinase_CS"/>
</dbReference>
<dbReference type="InterPro" id="IPR027417">
    <property type="entry name" value="P-loop_NTPase"/>
</dbReference>
<dbReference type="NCBIfam" id="TIGR01351">
    <property type="entry name" value="adk"/>
    <property type="match status" value="1"/>
</dbReference>
<dbReference type="NCBIfam" id="NF001381">
    <property type="entry name" value="PRK00279.1-3"/>
    <property type="match status" value="1"/>
</dbReference>
<dbReference type="NCBIfam" id="NF011100">
    <property type="entry name" value="PRK14527.1"/>
    <property type="match status" value="1"/>
</dbReference>
<dbReference type="NCBIfam" id="NF011101">
    <property type="entry name" value="PRK14528.1"/>
    <property type="match status" value="1"/>
</dbReference>
<dbReference type="NCBIfam" id="NF011104">
    <property type="entry name" value="PRK14531.1"/>
    <property type="match status" value="1"/>
</dbReference>
<dbReference type="NCBIfam" id="NF011105">
    <property type="entry name" value="PRK14532.1"/>
    <property type="match status" value="1"/>
</dbReference>
<dbReference type="PANTHER" id="PTHR23359">
    <property type="entry name" value="NUCLEOTIDE KINASE"/>
    <property type="match status" value="1"/>
</dbReference>
<dbReference type="Pfam" id="PF00406">
    <property type="entry name" value="ADK"/>
    <property type="match status" value="1"/>
</dbReference>
<dbReference type="PRINTS" id="PR00094">
    <property type="entry name" value="ADENYLTKNASE"/>
</dbReference>
<dbReference type="SUPFAM" id="SSF52540">
    <property type="entry name" value="P-loop containing nucleoside triphosphate hydrolases"/>
    <property type="match status" value="1"/>
</dbReference>
<dbReference type="PROSITE" id="PS00113">
    <property type="entry name" value="ADENYLATE_KINASE"/>
    <property type="match status" value="1"/>
</dbReference>
<feature type="chain" id="PRO_1000058791" description="Adenylate kinase">
    <location>
        <begin position="1"/>
        <end position="194"/>
    </location>
</feature>
<feature type="region of interest" description="NMP" evidence="1">
    <location>
        <begin position="30"/>
        <end position="59"/>
    </location>
</feature>
<feature type="region of interest" description="LID" evidence="1">
    <location>
        <begin position="126"/>
        <end position="142"/>
    </location>
</feature>
<feature type="binding site" evidence="1">
    <location>
        <begin position="10"/>
        <end position="15"/>
    </location>
    <ligand>
        <name>ATP</name>
        <dbReference type="ChEBI" id="CHEBI:30616"/>
    </ligand>
</feature>
<feature type="binding site" evidence="1">
    <location>
        <position position="31"/>
    </location>
    <ligand>
        <name>AMP</name>
        <dbReference type="ChEBI" id="CHEBI:456215"/>
    </ligand>
</feature>
<feature type="binding site" evidence="1">
    <location>
        <position position="36"/>
    </location>
    <ligand>
        <name>AMP</name>
        <dbReference type="ChEBI" id="CHEBI:456215"/>
    </ligand>
</feature>
<feature type="binding site" evidence="1">
    <location>
        <begin position="57"/>
        <end position="59"/>
    </location>
    <ligand>
        <name>AMP</name>
        <dbReference type="ChEBI" id="CHEBI:456215"/>
    </ligand>
</feature>
<feature type="binding site" evidence="1">
    <location>
        <begin position="85"/>
        <end position="88"/>
    </location>
    <ligand>
        <name>AMP</name>
        <dbReference type="ChEBI" id="CHEBI:456215"/>
    </ligand>
</feature>
<feature type="binding site" evidence="1">
    <location>
        <position position="92"/>
    </location>
    <ligand>
        <name>AMP</name>
        <dbReference type="ChEBI" id="CHEBI:456215"/>
    </ligand>
</feature>
<feature type="binding site" evidence="1">
    <location>
        <position position="127"/>
    </location>
    <ligand>
        <name>ATP</name>
        <dbReference type="ChEBI" id="CHEBI:30616"/>
    </ligand>
</feature>
<feature type="binding site" evidence="1">
    <location>
        <position position="139"/>
    </location>
    <ligand>
        <name>AMP</name>
        <dbReference type="ChEBI" id="CHEBI:456215"/>
    </ligand>
</feature>
<feature type="binding site" evidence="1">
    <location>
        <position position="150"/>
    </location>
    <ligand>
        <name>AMP</name>
        <dbReference type="ChEBI" id="CHEBI:456215"/>
    </ligand>
</feature>
<feature type="binding site" evidence="1">
    <location>
        <position position="178"/>
    </location>
    <ligand>
        <name>ATP</name>
        <dbReference type="ChEBI" id="CHEBI:30616"/>
    </ligand>
</feature>
<comment type="function">
    <text evidence="1">Catalyzes the reversible transfer of the terminal phosphate group between ATP and AMP. Plays an important role in cellular energy homeostasis and in adenine nucleotide metabolism.</text>
</comment>
<comment type="catalytic activity">
    <reaction evidence="1">
        <text>AMP + ATP = 2 ADP</text>
        <dbReference type="Rhea" id="RHEA:12973"/>
        <dbReference type="ChEBI" id="CHEBI:30616"/>
        <dbReference type="ChEBI" id="CHEBI:456215"/>
        <dbReference type="ChEBI" id="CHEBI:456216"/>
        <dbReference type="EC" id="2.7.4.3"/>
    </reaction>
</comment>
<comment type="pathway">
    <text evidence="1">Purine metabolism; AMP biosynthesis via salvage pathway; AMP from ADP: step 1/1.</text>
</comment>
<comment type="subunit">
    <text evidence="1">Monomer.</text>
</comment>
<comment type="subcellular location">
    <subcellularLocation>
        <location evidence="1">Cytoplasm</location>
    </subcellularLocation>
</comment>
<comment type="domain">
    <text evidence="1">Consists of three domains, a large central CORE domain and two small peripheral domains, NMPbind and LID, which undergo movements during catalysis. The LID domain closes over the site of phosphoryl transfer upon ATP binding. Assembling and dissambling the active center during each catalytic cycle provides an effective means to prevent ATP hydrolysis.</text>
</comment>
<comment type="similarity">
    <text evidence="1">Belongs to the adenylate kinase family.</text>
</comment>
<accession>Q2YRT7</accession>
<organism>
    <name type="scientific">Brucella abortus (strain 2308)</name>
    <dbReference type="NCBI Taxonomy" id="359391"/>
    <lineage>
        <taxon>Bacteria</taxon>
        <taxon>Pseudomonadati</taxon>
        <taxon>Pseudomonadota</taxon>
        <taxon>Alphaproteobacteria</taxon>
        <taxon>Hyphomicrobiales</taxon>
        <taxon>Brucellaceae</taxon>
        <taxon>Brucella/Ochrobactrum group</taxon>
        <taxon>Brucella</taxon>
    </lineage>
</organism>
<keyword id="KW-0067">ATP-binding</keyword>
<keyword id="KW-0963">Cytoplasm</keyword>
<keyword id="KW-0418">Kinase</keyword>
<keyword id="KW-0545">Nucleotide biosynthesis</keyword>
<keyword id="KW-0547">Nucleotide-binding</keyword>
<keyword id="KW-1185">Reference proteome</keyword>
<keyword id="KW-0808">Transferase</keyword>
<sequence length="194" mass="20850">MRLILLGPPGAGKGTQAGLLTKKHGIPQLSTGDMLRAAVAQQSEIGKRAKAVMDAGQLVSDEIVNQIVSERIDAPDCANGFILDGYPRTVPQAQALSQMLSGKGLKLDAVIELKVDENALVKRMESRVAETIAKGGQVRSDDNPEAFRKRLVEYREKTAPLSSYYAGTGELRIINGMAPVEEVTAEIERILVPA</sequence>
<proteinExistence type="inferred from homology"/>
<name>KAD_BRUA2</name>
<evidence type="ECO:0000255" key="1">
    <source>
        <dbReference type="HAMAP-Rule" id="MF_00235"/>
    </source>
</evidence>
<protein>
    <recommendedName>
        <fullName evidence="1">Adenylate kinase</fullName>
        <shortName evidence="1">AK</shortName>
        <ecNumber evidence="1">2.7.4.3</ecNumber>
    </recommendedName>
    <alternativeName>
        <fullName evidence="1">ATP-AMP transphosphorylase</fullName>
    </alternativeName>
    <alternativeName>
        <fullName evidence="1">ATP:AMP phosphotransferase</fullName>
    </alternativeName>
    <alternativeName>
        <fullName evidence="1">Adenylate monophosphate kinase</fullName>
    </alternativeName>
</protein>
<reference key="1">
    <citation type="journal article" date="2005" name="Infect. Immun.">
        <title>Whole-genome analyses of speciation events in pathogenic Brucellae.</title>
        <authorList>
            <person name="Chain P.S."/>
            <person name="Comerci D.J."/>
            <person name="Tolmasky M.E."/>
            <person name="Larimer F.W."/>
            <person name="Malfatti S.A."/>
            <person name="Vergez L.M."/>
            <person name="Aguero F."/>
            <person name="Land M.L."/>
            <person name="Ugalde R.A."/>
            <person name="Garcia E."/>
        </authorList>
    </citation>
    <scope>NUCLEOTIDE SEQUENCE [LARGE SCALE GENOMIC DNA]</scope>
    <source>
        <strain>2308</strain>
    </source>
</reference>